<proteinExistence type="inferred from homology"/>
<keyword id="KW-0067">ATP-binding</keyword>
<keyword id="KW-0119">Carbohydrate metabolism</keyword>
<keyword id="KW-0963">Cytoplasm</keyword>
<keyword id="KW-0299">Galactose metabolism</keyword>
<keyword id="KW-0418">Kinase</keyword>
<keyword id="KW-0460">Magnesium</keyword>
<keyword id="KW-0479">Metal-binding</keyword>
<keyword id="KW-0547">Nucleotide-binding</keyword>
<keyword id="KW-1185">Reference proteome</keyword>
<keyword id="KW-0808">Transferase</keyword>
<organism>
    <name type="scientific">Escherichia coli O139:H28 (strain E24377A / ETEC)</name>
    <dbReference type="NCBI Taxonomy" id="331111"/>
    <lineage>
        <taxon>Bacteria</taxon>
        <taxon>Pseudomonadati</taxon>
        <taxon>Pseudomonadota</taxon>
        <taxon>Gammaproteobacteria</taxon>
        <taxon>Enterobacterales</taxon>
        <taxon>Enterobacteriaceae</taxon>
        <taxon>Escherichia</taxon>
    </lineage>
</organism>
<feature type="chain" id="PRO_1000059002" description="Galactokinase">
    <location>
        <begin position="1"/>
        <end position="382"/>
    </location>
</feature>
<feature type="active site" description="Proton acceptor" evidence="1">
    <location>
        <position position="174"/>
    </location>
</feature>
<feature type="binding site" evidence="1">
    <location>
        <begin position="34"/>
        <end position="37"/>
    </location>
    <ligand>
        <name>substrate</name>
    </ligand>
</feature>
<feature type="binding site" evidence="1">
    <location>
        <begin position="124"/>
        <end position="130"/>
    </location>
    <ligand>
        <name>ATP</name>
        <dbReference type="ChEBI" id="CHEBI:30616"/>
    </ligand>
</feature>
<feature type="binding site" evidence="1">
    <location>
        <position position="130"/>
    </location>
    <ligand>
        <name>Mg(2+)</name>
        <dbReference type="ChEBI" id="CHEBI:18420"/>
    </ligand>
</feature>
<feature type="binding site" evidence="1">
    <location>
        <position position="162"/>
    </location>
    <ligand>
        <name>Mg(2+)</name>
        <dbReference type="ChEBI" id="CHEBI:18420"/>
    </ligand>
</feature>
<feature type="binding site" evidence="1">
    <location>
        <position position="223"/>
    </location>
    <ligand>
        <name>substrate</name>
    </ligand>
</feature>
<feature type="site" description="Transition state stabilizer" evidence="1">
    <location>
        <position position="28"/>
    </location>
</feature>
<sequence>MSLKEKTQSLFANAFGYPATHTIQAPGRVNLIGEHTDYNDGFVLPCAIDYQTVISCAPRDDRKVRVMAADYENQLDEFSLDAPIVAHENYQWANYVRGVVKHLQLRNNSFGGVDMVISGNVPQGAGLSSSASLEVAVGTVLQQLYHLPLDGAQIALNGQEAENQFVGCNCGIMDQLISALGKKDHALLIDCRSLGTKAVSMPKGVAVVIINSNFKRTLVGSEYNTRREQCETGARFFQQPALRDVTIEEFNAVAHELDPIVAKRVRHILTENARTVEAASALEQGDLKRMGELMAESHASMRDDFEITVPQIDTLVEIVKAVIGDKGGVRMTGGGFGGCIVALIPEELVPAVQQAVAEQYEAKTGIKETFYVCKPSQGAGQC</sequence>
<dbReference type="EC" id="2.7.1.6" evidence="1"/>
<dbReference type="EMBL" id="CP000800">
    <property type="protein sequence ID" value="ABV20731.1"/>
    <property type="molecule type" value="Genomic_DNA"/>
</dbReference>
<dbReference type="RefSeq" id="WP_000053415.1">
    <property type="nucleotide sequence ID" value="NC_009801.1"/>
</dbReference>
<dbReference type="SMR" id="A7ZJD2"/>
<dbReference type="GeneID" id="75170756"/>
<dbReference type="KEGG" id="ecw:EcE24377A_0784"/>
<dbReference type="HOGENOM" id="CLU_017814_2_1_6"/>
<dbReference type="UniPathway" id="UPA00214"/>
<dbReference type="Proteomes" id="UP000001122">
    <property type="component" value="Chromosome"/>
</dbReference>
<dbReference type="GO" id="GO:0005829">
    <property type="term" value="C:cytosol"/>
    <property type="evidence" value="ECO:0007669"/>
    <property type="project" value="TreeGrafter"/>
</dbReference>
<dbReference type="GO" id="GO:0005524">
    <property type="term" value="F:ATP binding"/>
    <property type="evidence" value="ECO:0007669"/>
    <property type="project" value="UniProtKB-UniRule"/>
</dbReference>
<dbReference type="GO" id="GO:0004335">
    <property type="term" value="F:galactokinase activity"/>
    <property type="evidence" value="ECO:0007669"/>
    <property type="project" value="UniProtKB-UniRule"/>
</dbReference>
<dbReference type="GO" id="GO:0000287">
    <property type="term" value="F:magnesium ion binding"/>
    <property type="evidence" value="ECO:0007669"/>
    <property type="project" value="UniProtKB-UniRule"/>
</dbReference>
<dbReference type="GO" id="GO:0006012">
    <property type="term" value="P:galactose metabolic process"/>
    <property type="evidence" value="ECO:0007669"/>
    <property type="project" value="UniProtKB-UniRule"/>
</dbReference>
<dbReference type="FunFam" id="3.30.230.10:FF:000017">
    <property type="entry name" value="Galactokinase"/>
    <property type="match status" value="1"/>
</dbReference>
<dbReference type="FunFam" id="3.30.70.890:FF:000001">
    <property type="entry name" value="Galactokinase"/>
    <property type="match status" value="1"/>
</dbReference>
<dbReference type="Gene3D" id="3.30.230.10">
    <property type="match status" value="1"/>
</dbReference>
<dbReference type="Gene3D" id="3.30.70.890">
    <property type="entry name" value="GHMP kinase, C-terminal domain"/>
    <property type="match status" value="1"/>
</dbReference>
<dbReference type="HAMAP" id="MF_00246">
    <property type="entry name" value="Galactokinase"/>
    <property type="match status" value="1"/>
</dbReference>
<dbReference type="InterPro" id="IPR000705">
    <property type="entry name" value="Galactokinase"/>
</dbReference>
<dbReference type="InterPro" id="IPR022963">
    <property type="entry name" value="Galactokinase_bac"/>
</dbReference>
<dbReference type="InterPro" id="IPR019741">
    <property type="entry name" value="Galactokinase_CS"/>
</dbReference>
<dbReference type="InterPro" id="IPR019539">
    <property type="entry name" value="GalKase_N"/>
</dbReference>
<dbReference type="InterPro" id="IPR013750">
    <property type="entry name" value="GHMP_kinase_C_dom"/>
</dbReference>
<dbReference type="InterPro" id="IPR036554">
    <property type="entry name" value="GHMP_kinase_C_sf"/>
</dbReference>
<dbReference type="InterPro" id="IPR006204">
    <property type="entry name" value="GHMP_kinase_N_dom"/>
</dbReference>
<dbReference type="InterPro" id="IPR006203">
    <property type="entry name" value="GHMP_knse_ATP-bd_CS"/>
</dbReference>
<dbReference type="InterPro" id="IPR006206">
    <property type="entry name" value="Mevalonate/galactokinase"/>
</dbReference>
<dbReference type="InterPro" id="IPR020568">
    <property type="entry name" value="Ribosomal_Su5_D2-typ_SF"/>
</dbReference>
<dbReference type="InterPro" id="IPR014721">
    <property type="entry name" value="Ribsml_uS5_D2-typ_fold_subgr"/>
</dbReference>
<dbReference type="NCBIfam" id="TIGR00131">
    <property type="entry name" value="gal_kin"/>
    <property type="match status" value="1"/>
</dbReference>
<dbReference type="NCBIfam" id="NF003472">
    <property type="entry name" value="PRK05101.1"/>
    <property type="match status" value="1"/>
</dbReference>
<dbReference type="PANTHER" id="PTHR10457:SF7">
    <property type="entry name" value="GALACTOKINASE-RELATED"/>
    <property type="match status" value="1"/>
</dbReference>
<dbReference type="PANTHER" id="PTHR10457">
    <property type="entry name" value="MEVALONATE KINASE/GALACTOKINASE"/>
    <property type="match status" value="1"/>
</dbReference>
<dbReference type="Pfam" id="PF10509">
    <property type="entry name" value="GalKase_gal_bdg"/>
    <property type="match status" value="1"/>
</dbReference>
<dbReference type="Pfam" id="PF08544">
    <property type="entry name" value="GHMP_kinases_C"/>
    <property type="match status" value="1"/>
</dbReference>
<dbReference type="Pfam" id="PF00288">
    <property type="entry name" value="GHMP_kinases_N"/>
    <property type="match status" value="1"/>
</dbReference>
<dbReference type="PIRSF" id="PIRSF000530">
    <property type="entry name" value="Galactokinase"/>
    <property type="match status" value="1"/>
</dbReference>
<dbReference type="PRINTS" id="PR00473">
    <property type="entry name" value="GALCTOKINASE"/>
</dbReference>
<dbReference type="PRINTS" id="PR00959">
    <property type="entry name" value="MEVGALKINASE"/>
</dbReference>
<dbReference type="SUPFAM" id="SSF55060">
    <property type="entry name" value="GHMP Kinase, C-terminal domain"/>
    <property type="match status" value="1"/>
</dbReference>
<dbReference type="SUPFAM" id="SSF54211">
    <property type="entry name" value="Ribosomal protein S5 domain 2-like"/>
    <property type="match status" value="1"/>
</dbReference>
<dbReference type="PROSITE" id="PS00106">
    <property type="entry name" value="GALACTOKINASE"/>
    <property type="match status" value="1"/>
</dbReference>
<dbReference type="PROSITE" id="PS00627">
    <property type="entry name" value="GHMP_KINASES_ATP"/>
    <property type="match status" value="1"/>
</dbReference>
<comment type="function">
    <text evidence="1">Catalyzes the transfer of the gamma-phosphate of ATP to D-galactose to form alpha-D-galactose-1-phosphate (Gal-1-P).</text>
</comment>
<comment type="catalytic activity">
    <reaction evidence="1">
        <text>alpha-D-galactose + ATP = alpha-D-galactose 1-phosphate + ADP + H(+)</text>
        <dbReference type="Rhea" id="RHEA:13553"/>
        <dbReference type="ChEBI" id="CHEBI:15378"/>
        <dbReference type="ChEBI" id="CHEBI:28061"/>
        <dbReference type="ChEBI" id="CHEBI:30616"/>
        <dbReference type="ChEBI" id="CHEBI:58336"/>
        <dbReference type="ChEBI" id="CHEBI:456216"/>
        <dbReference type="EC" id="2.7.1.6"/>
    </reaction>
</comment>
<comment type="pathway">
    <text evidence="1">Carbohydrate metabolism; galactose metabolism.</text>
</comment>
<comment type="subcellular location">
    <subcellularLocation>
        <location evidence="1">Cytoplasm</location>
    </subcellularLocation>
</comment>
<comment type="similarity">
    <text evidence="1">Belongs to the GHMP kinase family. GalK subfamily.</text>
</comment>
<gene>
    <name evidence="1" type="primary">galK</name>
    <name type="ordered locus">EcE24377A_0784</name>
</gene>
<name>GAL1_ECO24</name>
<evidence type="ECO:0000255" key="1">
    <source>
        <dbReference type="HAMAP-Rule" id="MF_00246"/>
    </source>
</evidence>
<accession>A7ZJD2</accession>
<reference key="1">
    <citation type="journal article" date="2008" name="J. Bacteriol.">
        <title>The pangenome structure of Escherichia coli: comparative genomic analysis of E. coli commensal and pathogenic isolates.</title>
        <authorList>
            <person name="Rasko D.A."/>
            <person name="Rosovitz M.J."/>
            <person name="Myers G.S.A."/>
            <person name="Mongodin E.F."/>
            <person name="Fricke W.F."/>
            <person name="Gajer P."/>
            <person name="Crabtree J."/>
            <person name="Sebaihia M."/>
            <person name="Thomson N.R."/>
            <person name="Chaudhuri R."/>
            <person name="Henderson I.R."/>
            <person name="Sperandio V."/>
            <person name="Ravel J."/>
        </authorList>
    </citation>
    <scope>NUCLEOTIDE SEQUENCE [LARGE SCALE GENOMIC DNA]</scope>
    <source>
        <strain>E24377A / ETEC</strain>
    </source>
</reference>
<protein>
    <recommendedName>
        <fullName evidence="1">Galactokinase</fullName>
        <ecNumber evidence="1">2.7.1.6</ecNumber>
    </recommendedName>
    <alternativeName>
        <fullName evidence="1">Galactose kinase</fullName>
    </alternativeName>
</protein>